<protein>
    <recommendedName>
        <fullName evidence="2">Type II methyltransferase M.BanIII</fullName>
        <shortName evidence="2">M.BanIII</shortName>
        <ecNumber>2.1.1.72</ecNumber>
    </recommendedName>
    <alternativeName>
        <fullName>Adenine-specific methyltransferase BanIII</fullName>
    </alternativeName>
    <alternativeName>
        <fullName>Modification methylase BanIII</fullName>
    </alternativeName>
</protein>
<proteinExistence type="evidence at protein level"/>
<evidence type="ECO:0000269" key="1">
    <source>
    </source>
</evidence>
<evidence type="ECO:0000303" key="2">
    <source>
    </source>
</evidence>
<evidence type="ECO:0000305" key="3"/>
<organism>
    <name type="scientific">Aneurinibacillus aneurinilyticus</name>
    <name type="common">Bacillus aneurinolyticus</name>
    <dbReference type="NCBI Taxonomy" id="1391"/>
    <lineage>
        <taxon>Bacteria</taxon>
        <taxon>Bacillati</taxon>
        <taxon>Bacillota</taxon>
        <taxon>Bacilli</taxon>
        <taxon>Bacillales</taxon>
        <taxon>Paenibacillaceae</taxon>
        <taxon>Aneurinibacillus group</taxon>
        <taxon>Aneurinibacillus</taxon>
    </lineage>
</organism>
<dbReference type="EC" id="2.1.1.72"/>
<dbReference type="EMBL" id="X83417">
    <property type="protein sequence ID" value="CAA58443.1"/>
    <property type="status" value="ALT_SEQ"/>
    <property type="molecule type" value="Genomic_DNA"/>
</dbReference>
<dbReference type="PIR" id="JH0224">
    <property type="entry name" value="JH0224"/>
</dbReference>
<dbReference type="SMR" id="P22772"/>
<dbReference type="REBASE" id="3296">
    <property type="entry name" value="M.BanIII"/>
</dbReference>
<dbReference type="PRO" id="PR:P22772"/>
<dbReference type="GO" id="GO:0003677">
    <property type="term" value="F:DNA binding"/>
    <property type="evidence" value="ECO:0007669"/>
    <property type="project" value="UniProtKB-KW"/>
</dbReference>
<dbReference type="GO" id="GO:0009007">
    <property type="term" value="F:site-specific DNA-methyltransferase (adenine-specific) activity"/>
    <property type="evidence" value="ECO:0007669"/>
    <property type="project" value="UniProtKB-EC"/>
</dbReference>
<dbReference type="GO" id="GO:0009307">
    <property type="term" value="P:DNA restriction-modification system"/>
    <property type="evidence" value="ECO:0007669"/>
    <property type="project" value="UniProtKB-KW"/>
</dbReference>
<dbReference type="GO" id="GO:0032259">
    <property type="term" value="P:methylation"/>
    <property type="evidence" value="ECO:0007669"/>
    <property type="project" value="UniProtKB-KW"/>
</dbReference>
<dbReference type="CDD" id="cd02440">
    <property type="entry name" value="AdoMet_MTases"/>
    <property type="match status" value="1"/>
</dbReference>
<dbReference type="Gene3D" id="3.40.50.150">
    <property type="entry name" value="Vaccinia Virus protein VP39"/>
    <property type="match status" value="1"/>
</dbReference>
<dbReference type="InterPro" id="IPR002052">
    <property type="entry name" value="DNA_methylase_N6_adenine_CS"/>
</dbReference>
<dbReference type="InterPro" id="IPR011639">
    <property type="entry name" value="MethylTrfase_TaqI-like_dom"/>
</dbReference>
<dbReference type="InterPro" id="IPR050953">
    <property type="entry name" value="N4_N6_ade-DNA_methylase"/>
</dbReference>
<dbReference type="InterPro" id="IPR029063">
    <property type="entry name" value="SAM-dependent_MTases_sf"/>
</dbReference>
<dbReference type="InterPro" id="IPR025931">
    <property type="entry name" value="TaqI_C"/>
</dbReference>
<dbReference type="PANTHER" id="PTHR33841:SF1">
    <property type="entry name" value="DNA METHYLTRANSFERASE A"/>
    <property type="match status" value="1"/>
</dbReference>
<dbReference type="PANTHER" id="PTHR33841">
    <property type="entry name" value="DNA METHYLTRANSFERASE YEEA-RELATED"/>
    <property type="match status" value="1"/>
</dbReference>
<dbReference type="Pfam" id="PF07669">
    <property type="entry name" value="Eco57I"/>
    <property type="match status" value="1"/>
</dbReference>
<dbReference type="Pfam" id="PF12950">
    <property type="entry name" value="TaqI_C"/>
    <property type="match status" value="1"/>
</dbReference>
<dbReference type="PRINTS" id="PR00507">
    <property type="entry name" value="N12N6MTFRASE"/>
</dbReference>
<dbReference type="SUPFAM" id="SSF53335">
    <property type="entry name" value="S-adenosyl-L-methionine-dependent methyltransferases"/>
    <property type="match status" value="1"/>
</dbReference>
<dbReference type="PROSITE" id="PS00092">
    <property type="entry name" value="N6_MTASE"/>
    <property type="match status" value="1"/>
</dbReference>
<comment type="function">
    <text evidence="2">A gamma subtype methylase, recognizes the double-stranded sequence 5'-ATCGAT-3', methylates A-5 on both strands, and protects the DNA from cleavage by the BanIII endonuclease.</text>
</comment>
<comment type="catalytic activity">
    <reaction>
        <text>a 2'-deoxyadenosine in DNA + S-adenosyl-L-methionine = an N(6)-methyl-2'-deoxyadenosine in DNA + S-adenosyl-L-homocysteine + H(+)</text>
        <dbReference type="Rhea" id="RHEA:15197"/>
        <dbReference type="Rhea" id="RHEA-COMP:12418"/>
        <dbReference type="Rhea" id="RHEA-COMP:12419"/>
        <dbReference type="ChEBI" id="CHEBI:15378"/>
        <dbReference type="ChEBI" id="CHEBI:57856"/>
        <dbReference type="ChEBI" id="CHEBI:59789"/>
        <dbReference type="ChEBI" id="CHEBI:90615"/>
        <dbReference type="ChEBI" id="CHEBI:90616"/>
        <dbReference type="EC" id="2.1.1.72"/>
    </reaction>
</comment>
<comment type="miscellaneous">
    <text evidence="1">The protein sequnce was determined following expression in E.coli.</text>
</comment>
<comment type="similarity">
    <text evidence="3">Belongs to the N(4)/N(6)-methyltransferase family.</text>
</comment>
<comment type="sequence caution" evidence="3">
    <conflict type="miscellaneous discrepancy">
        <sequence resource="EMBL-CDS" id="CAA58443"/>
    </conflict>
    <text>Substitute stop codon at 506 with Tyr.</text>
</comment>
<sequence length="580" mass="66276">MELTIEEMLIKQKETGAHYTPTDLGDIIAKRLINELKKSGISGTKKIRGLDPSCGDGELLLSLNRMGKFNNIDNIELIGIDEDKEAIKEADFRLNEMGINDAKLSGGDFLDMVDLEGNLSLFDDDLSKIEPVDLIIANPPYVRTQVLGADRAQKLAKLFNLKGRVDLYHAFLVAMTLQLKPGGLIGVITSNKYLANTTGESIRQFLAENYDIIEIMDLGDTKLFSGAVLQAIFFGTKKLNKGIRQTAPANFYKIYEETDPSKTEVSIKFETLFGLLESSNTGVFNVDEKFYSVSCGKLIVPDSFKEPWVMATDEEYNWITNINNNSYCTIQDLCDLKVGIKTTADKVFIKSTWEELPDEIKPEVEVLKLLISTDHASKWRPLERIGNQKILYTHENLNGKKKAIHFTQYPHALAYLETHRETLEGRKYVIKAKRNWYQIWLPQNPDHWALPKILFPDISPEPKFFYEDEGCCIDGNCYWIIPKEENNNDILFLILGISNTKYMTNYHDIAFNNKLYPGRTRYLTQYVSNYPLPNPEANYSQEIIDVLRELLFQNPNDERKIEIENQIENLTALAFGVERL</sequence>
<gene>
    <name type="primary">banIIIM</name>
</gene>
<name>MTB3_ANEAE</name>
<keyword id="KW-0903">Direct protein sequencing</keyword>
<keyword id="KW-0238">DNA-binding</keyword>
<keyword id="KW-0489">Methyltransferase</keyword>
<keyword id="KW-0680">Restriction system</keyword>
<keyword id="KW-0949">S-adenosyl-L-methionine</keyword>
<keyword id="KW-0808">Transferase</keyword>
<accession>P22772</accession>
<accession>Q44656</accession>
<feature type="chain" id="PRO_0000087943" description="Type II methyltransferase M.BanIII">
    <location>
        <begin position="1"/>
        <end position="580"/>
    </location>
</feature>
<reference key="1">
    <citation type="journal article" date="1990" name="Agric. Biol. Chem.">
        <title>Nucleotide sequence of the gene coding for the BanIII DNA methyltransferase in Bacillus aneurinolyticus.</title>
        <authorList>
            <person name="Kawakami B."/>
            <person name="Sasaki A."/>
            <person name="Oka M."/>
            <person name="Maekawa Y."/>
        </authorList>
    </citation>
    <scope>NUCLEOTIDE SEQUENCE [GENOMIC DNA]</scope>
    <scope>PROTEIN SEQUENCE OF 1-6</scope>
    <source>
        <strain>ATCC 12856 / DSM 5562 / JCM 9024 / NBRC 15521 / IAM 1077 / NRS 1589</strain>
    </source>
</reference>
<reference key="2">
    <citation type="journal article" date="2003" name="Nucleic Acids Res.">
        <title>A nomenclature for restriction enzymes, DNA methyltransferases, homing endonucleases and their genes.</title>
        <authorList>
            <person name="Roberts R.J."/>
            <person name="Belfort M."/>
            <person name="Bestor T."/>
            <person name="Bhagwat A.S."/>
            <person name="Bickle T.A."/>
            <person name="Bitinaite J."/>
            <person name="Blumenthal R.M."/>
            <person name="Degtyarev S.K."/>
            <person name="Dryden D.T."/>
            <person name="Dybvig K."/>
            <person name="Firman K."/>
            <person name="Gromova E.S."/>
            <person name="Gumport R.I."/>
            <person name="Halford S.E."/>
            <person name="Hattman S."/>
            <person name="Heitman J."/>
            <person name="Hornby D.P."/>
            <person name="Janulaitis A."/>
            <person name="Jeltsch A."/>
            <person name="Josephsen J."/>
            <person name="Kiss A."/>
            <person name="Klaenhammer T.R."/>
            <person name="Kobayashi I."/>
            <person name="Kong H."/>
            <person name="Krueger D.H."/>
            <person name="Lacks S."/>
            <person name="Marinus M.G."/>
            <person name="Miyahara M."/>
            <person name="Morgan R.D."/>
            <person name="Murray N.E."/>
            <person name="Nagaraja V."/>
            <person name="Piekarowicz A."/>
            <person name="Pingoud A."/>
            <person name="Raleigh E."/>
            <person name="Rao D.N."/>
            <person name="Reich N."/>
            <person name="Repin V.E."/>
            <person name="Selker E.U."/>
            <person name="Shaw P.C."/>
            <person name="Stein D.C."/>
            <person name="Stoddard B.L."/>
            <person name="Szybalski W."/>
            <person name="Trautner T.A."/>
            <person name="Van Etten J.L."/>
            <person name="Vitor J.M."/>
            <person name="Wilson G.G."/>
            <person name="Xu S.Y."/>
        </authorList>
    </citation>
    <scope>NOMENCLATURE</scope>
    <scope>SUBTYPE</scope>
</reference>